<gene>
    <name type="primary">sfh5</name>
    <name type="ORF">AFUA_5G03690</name>
</gene>
<reference key="1">
    <citation type="journal article" date="2005" name="Nature">
        <title>Genomic sequence of the pathogenic and allergenic filamentous fungus Aspergillus fumigatus.</title>
        <authorList>
            <person name="Nierman W.C."/>
            <person name="Pain A."/>
            <person name="Anderson M.J."/>
            <person name="Wortman J.R."/>
            <person name="Kim H.S."/>
            <person name="Arroyo J."/>
            <person name="Berriman M."/>
            <person name="Abe K."/>
            <person name="Archer D.B."/>
            <person name="Bermejo C."/>
            <person name="Bennett J.W."/>
            <person name="Bowyer P."/>
            <person name="Chen D."/>
            <person name="Collins M."/>
            <person name="Coulsen R."/>
            <person name="Davies R."/>
            <person name="Dyer P.S."/>
            <person name="Farman M.L."/>
            <person name="Fedorova N."/>
            <person name="Fedorova N.D."/>
            <person name="Feldblyum T.V."/>
            <person name="Fischer R."/>
            <person name="Fosker N."/>
            <person name="Fraser A."/>
            <person name="Garcia J.L."/>
            <person name="Garcia M.J."/>
            <person name="Goble A."/>
            <person name="Goldman G.H."/>
            <person name="Gomi K."/>
            <person name="Griffith-Jones S."/>
            <person name="Gwilliam R."/>
            <person name="Haas B.J."/>
            <person name="Haas H."/>
            <person name="Harris D.E."/>
            <person name="Horiuchi H."/>
            <person name="Huang J."/>
            <person name="Humphray S."/>
            <person name="Jimenez J."/>
            <person name="Keller N."/>
            <person name="Khouri H."/>
            <person name="Kitamoto K."/>
            <person name="Kobayashi T."/>
            <person name="Konzack S."/>
            <person name="Kulkarni R."/>
            <person name="Kumagai T."/>
            <person name="Lafton A."/>
            <person name="Latge J.-P."/>
            <person name="Li W."/>
            <person name="Lord A."/>
            <person name="Lu C."/>
            <person name="Majoros W.H."/>
            <person name="May G.S."/>
            <person name="Miller B.L."/>
            <person name="Mohamoud Y."/>
            <person name="Molina M."/>
            <person name="Monod M."/>
            <person name="Mouyna I."/>
            <person name="Mulligan S."/>
            <person name="Murphy L.D."/>
            <person name="O'Neil S."/>
            <person name="Paulsen I."/>
            <person name="Penalva M.A."/>
            <person name="Pertea M."/>
            <person name="Price C."/>
            <person name="Pritchard B.L."/>
            <person name="Quail M.A."/>
            <person name="Rabbinowitsch E."/>
            <person name="Rawlins N."/>
            <person name="Rajandream M.A."/>
            <person name="Reichard U."/>
            <person name="Renauld H."/>
            <person name="Robson G.D."/>
            <person name="Rodriguez de Cordoba S."/>
            <person name="Rodriguez-Pena J.M."/>
            <person name="Ronning C.M."/>
            <person name="Rutter S."/>
            <person name="Salzberg S.L."/>
            <person name="Sanchez M."/>
            <person name="Sanchez-Ferrero J.C."/>
            <person name="Saunders D."/>
            <person name="Seeger K."/>
            <person name="Squares R."/>
            <person name="Squares S."/>
            <person name="Takeuchi M."/>
            <person name="Tekaia F."/>
            <person name="Turner G."/>
            <person name="Vazquez de Aldana C.R."/>
            <person name="Weidman J."/>
            <person name="White O."/>
            <person name="Woodward J.R."/>
            <person name="Yu J.-H."/>
            <person name="Fraser C.M."/>
            <person name="Galagan J.E."/>
            <person name="Asai K."/>
            <person name="Machida M."/>
            <person name="Hall N."/>
            <person name="Barrell B.G."/>
            <person name="Denning D.W."/>
        </authorList>
    </citation>
    <scope>NUCLEOTIDE SEQUENCE [LARGE SCALE GENOMIC DNA]</scope>
    <source>
        <strain>ATCC MYA-4609 / CBS 101355 / FGSC A1100 / Af293</strain>
    </source>
</reference>
<name>SFH5_ASPFU</name>
<dbReference type="EMBL" id="AAHF01000011">
    <property type="protein sequence ID" value="EAL85937.1"/>
    <property type="molecule type" value="Genomic_DNA"/>
</dbReference>
<dbReference type="RefSeq" id="XP_747975.1">
    <property type="nucleotide sequence ID" value="XM_742882.1"/>
</dbReference>
<dbReference type="SMR" id="Q4WEP0"/>
<dbReference type="FunCoup" id="Q4WEP0">
    <property type="interactions" value="50"/>
</dbReference>
<dbReference type="STRING" id="330879.Q4WEP0"/>
<dbReference type="EnsemblFungi" id="EAL85937">
    <property type="protein sequence ID" value="EAL85937"/>
    <property type="gene ID" value="AFUA_5G03690"/>
</dbReference>
<dbReference type="GeneID" id="3505477"/>
<dbReference type="KEGG" id="afm:AFUA_5G03690"/>
<dbReference type="VEuPathDB" id="FungiDB:Afu5g03690"/>
<dbReference type="eggNOG" id="KOG1471">
    <property type="taxonomic scope" value="Eukaryota"/>
</dbReference>
<dbReference type="HOGENOM" id="CLU_045138_1_0_1"/>
<dbReference type="InParanoid" id="Q4WEP0"/>
<dbReference type="OMA" id="MVQIHDY"/>
<dbReference type="OrthoDB" id="75724at2759"/>
<dbReference type="Proteomes" id="UP000002530">
    <property type="component" value="Chromosome 5"/>
</dbReference>
<dbReference type="GO" id="GO:0032541">
    <property type="term" value="C:cortical endoplasmic reticulum"/>
    <property type="evidence" value="ECO:0000318"/>
    <property type="project" value="GO_Central"/>
</dbReference>
<dbReference type="GO" id="GO:0005829">
    <property type="term" value="C:cytosol"/>
    <property type="evidence" value="ECO:0000318"/>
    <property type="project" value="GO_Central"/>
</dbReference>
<dbReference type="GO" id="GO:0005789">
    <property type="term" value="C:endoplasmic reticulum membrane"/>
    <property type="evidence" value="ECO:0007669"/>
    <property type="project" value="UniProtKB-SubCell"/>
</dbReference>
<dbReference type="GO" id="GO:0005886">
    <property type="term" value="C:plasma membrane"/>
    <property type="evidence" value="ECO:0000318"/>
    <property type="project" value="GO_Central"/>
</dbReference>
<dbReference type="GO" id="GO:0046872">
    <property type="term" value="F:metal ion binding"/>
    <property type="evidence" value="ECO:0007669"/>
    <property type="project" value="UniProtKB-KW"/>
</dbReference>
<dbReference type="GO" id="GO:0008526">
    <property type="term" value="F:phosphatidylinositol transfer activity"/>
    <property type="evidence" value="ECO:0000318"/>
    <property type="project" value="GO_Central"/>
</dbReference>
<dbReference type="GO" id="GO:0043001">
    <property type="term" value="P:Golgi to plasma membrane protein transport"/>
    <property type="evidence" value="ECO:0000318"/>
    <property type="project" value="GO_Central"/>
</dbReference>
<dbReference type="GO" id="GO:0017157">
    <property type="term" value="P:regulation of exocytosis"/>
    <property type="evidence" value="ECO:0000318"/>
    <property type="project" value="GO_Central"/>
</dbReference>
<dbReference type="CDD" id="cd00170">
    <property type="entry name" value="SEC14"/>
    <property type="match status" value="1"/>
</dbReference>
<dbReference type="FunFam" id="3.40.525.10:FF:000017">
    <property type="entry name" value="Phosphatidylinositol transfer protein sfh5"/>
    <property type="match status" value="1"/>
</dbReference>
<dbReference type="Gene3D" id="3.40.525.10">
    <property type="entry name" value="CRAL-TRIO lipid binding domain"/>
    <property type="match status" value="1"/>
</dbReference>
<dbReference type="InterPro" id="IPR001251">
    <property type="entry name" value="CRAL-TRIO_dom"/>
</dbReference>
<dbReference type="InterPro" id="IPR036865">
    <property type="entry name" value="CRAL-TRIO_dom_sf"/>
</dbReference>
<dbReference type="InterPro" id="IPR011074">
    <property type="entry name" value="CRAL/TRIO_N_dom"/>
</dbReference>
<dbReference type="InterPro" id="IPR036273">
    <property type="entry name" value="CRAL/TRIO_N_dom_sf"/>
</dbReference>
<dbReference type="InterPro" id="IPR042938">
    <property type="entry name" value="Sfh5"/>
</dbReference>
<dbReference type="PANTHER" id="PTHR47669">
    <property type="entry name" value="PHOSPHATIDYLINOSITOL TRANSFER PROTEIN SFH5"/>
    <property type="match status" value="1"/>
</dbReference>
<dbReference type="PANTHER" id="PTHR47669:SF1">
    <property type="entry name" value="PHOSPHATIDYLINOSITOL TRANSFER PROTEIN SFH5"/>
    <property type="match status" value="1"/>
</dbReference>
<dbReference type="Pfam" id="PF00650">
    <property type="entry name" value="CRAL_TRIO"/>
    <property type="match status" value="1"/>
</dbReference>
<dbReference type="Pfam" id="PF03765">
    <property type="entry name" value="CRAL_TRIO_N"/>
    <property type="match status" value="1"/>
</dbReference>
<dbReference type="SMART" id="SM00516">
    <property type="entry name" value="SEC14"/>
    <property type="match status" value="1"/>
</dbReference>
<dbReference type="SUPFAM" id="SSF52087">
    <property type="entry name" value="CRAL/TRIO domain"/>
    <property type="match status" value="1"/>
</dbReference>
<dbReference type="SUPFAM" id="SSF46938">
    <property type="entry name" value="CRAL/TRIO N-terminal domain"/>
    <property type="match status" value="1"/>
</dbReference>
<dbReference type="PROSITE" id="PS50191">
    <property type="entry name" value="CRAL_TRIO"/>
    <property type="match status" value="1"/>
</dbReference>
<organism>
    <name type="scientific">Aspergillus fumigatus (strain ATCC MYA-4609 / CBS 101355 / FGSC A1100 / Af293)</name>
    <name type="common">Neosartorya fumigata</name>
    <dbReference type="NCBI Taxonomy" id="330879"/>
    <lineage>
        <taxon>Eukaryota</taxon>
        <taxon>Fungi</taxon>
        <taxon>Dikarya</taxon>
        <taxon>Ascomycota</taxon>
        <taxon>Pezizomycotina</taxon>
        <taxon>Eurotiomycetes</taxon>
        <taxon>Eurotiomycetidae</taxon>
        <taxon>Eurotiales</taxon>
        <taxon>Aspergillaceae</taxon>
        <taxon>Aspergillus</taxon>
        <taxon>Aspergillus subgen. Fumigati</taxon>
    </lineage>
</organism>
<sequence length="424" mass="46170">MSVTMADQQPEKTTAPASDVADSQPAVVSNTDTRKETTETAEPQSEDKTATTTAQPAVETTATQSGTAETPAEADKAPAEVQQPPQAEEEKPVAQQPEQPAYLAKNPALSQFFERLPAIVSSSGHAEMWGVPLKDSNDAPTVNVLIKFLRANEGNVKLAEEQLTKALKWRKETNPSALAESTSYSATKFGGLGYLTTYKEANGAETVVTWNIYGGVKDINTTFGDMNEFVKWRVALMELAVKELKMAEATSVIDYDGEDPYQMIQVHDYQNVSFLRLNPAIKAATKKTIEVFTTAYPELLREKFFVNVPAIMGWMFAAMKVFLSKNTTRKFHPISNGANLAREFPSLKDQFPKVYGGSAPALQEGARTVSLIQDESAPAATEQSKEQANKEEAAQEESKPESAPEQPKADPDVIVQEAPAADAK</sequence>
<evidence type="ECO:0000250" key="1">
    <source>
        <dbReference type="UniProtKB" id="A6ZQI5"/>
    </source>
</evidence>
<evidence type="ECO:0000250" key="2">
    <source>
        <dbReference type="UniProtKB" id="P47008"/>
    </source>
</evidence>
<evidence type="ECO:0000255" key="3">
    <source>
        <dbReference type="PROSITE-ProRule" id="PRU00056"/>
    </source>
</evidence>
<evidence type="ECO:0000256" key="4">
    <source>
        <dbReference type="SAM" id="MobiDB-lite"/>
    </source>
</evidence>
<evidence type="ECO:0000305" key="5"/>
<keyword id="KW-0963">Cytoplasm</keyword>
<keyword id="KW-0256">Endoplasmic reticulum</keyword>
<keyword id="KW-0349">Heme</keyword>
<keyword id="KW-0408">Iron</keyword>
<keyword id="KW-0445">Lipid transport</keyword>
<keyword id="KW-0472">Membrane</keyword>
<keyword id="KW-0479">Metal-binding</keyword>
<keyword id="KW-0492">Microsome</keyword>
<keyword id="KW-1185">Reference proteome</keyword>
<keyword id="KW-0813">Transport</keyword>
<protein>
    <recommendedName>
        <fullName>Phosphatidylinositol transfer protein sfh5</fullName>
        <shortName>PITP sfh5</shortName>
    </recommendedName>
</protein>
<feature type="chain" id="PRO_0000324968" description="Phosphatidylinositol transfer protein sfh5">
    <location>
        <begin position="1"/>
        <end position="424"/>
    </location>
</feature>
<feature type="domain" description="CRAL-TRIO" evidence="3">
    <location>
        <begin position="188"/>
        <end position="363"/>
    </location>
</feature>
<feature type="region of interest" description="Disordered" evidence="4">
    <location>
        <begin position="1"/>
        <end position="98"/>
    </location>
</feature>
<feature type="region of interest" description="Disordered" evidence="4">
    <location>
        <begin position="372"/>
        <end position="424"/>
    </location>
</feature>
<feature type="compositionally biased region" description="Polar residues" evidence="4">
    <location>
        <begin position="1"/>
        <end position="16"/>
    </location>
</feature>
<feature type="compositionally biased region" description="Polar residues" evidence="4">
    <location>
        <begin position="50"/>
        <end position="68"/>
    </location>
</feature>
<feature type="compositionally biased region" description="Basic and acidic residues" evidence="4">
    <location>
        <begin position="383"/>
        <end position="411"/>
    </location>
</feature>
<feature type="binding site" evidence="1">
    <location>
        <position position="213"/>
    </location>
    <ligand>
        <name>heme</name>
        <dbReference type="ChEBI" id="CHEBI:30413"/>
    </ligand>
</feature>
<feature type="binding site" evidence="1">
    <location>
        <position position="233"/>
    </location>
    <ligand>
        <name>heme</name>
        <dbReference type="ChEBI" id="CHEBI:30413"/>
    </ligand>
</feature>
<feature type="binding site" evidence="1">
    <location>
        <position position="267"/>
    </location>
    <ligand>
        <name>heme</name>
        <dbReference type="ChEBI" id="CHEBI:30413"/>
    </ligand>
</feature>
<feature type="binding site" description="proximal binding residue" evidence="1">
    <location>
        <position position="269"/>
    </location>
    <ligand>
        <name>heme</name>
        <dbReference type="ChEBI" id="CHEBI:30413"/>
    </ligand>
    <ligandPart>
        <name>Fe</name>
        <dbReference type="ChEBI" id="CHEBI:18248"/>
    </ligandPart>
</feature>
<feature type="binding site" evidence="1">
    <location>
        <position position="303"/>
    </location>
    <ligand>
        <name>heme</name>
        <dbReference type="ChEBI" id="CHEBI:30413"/>
    </ligand>
</feature>
<comment type="function">
    <text evidence="2">Non-classical phosphatidylinositol (PtdIns) transfer protein (PITP), which exhibits PtdIns-binding/transfer activity in the absence of detectable PtdCho-binding/transfer activity. Regulates PtdIns(4,5)P2 homeostasis at the plasma membrane. Heme-binding protein that may play a role in organic oxidant-induced stress responses.</text>
</comment>
<comment type="catalytic activity">
    <reaction evidence="2">
        <text>a 1,2-diacyl-sn-glycero-3-phospho-(1D-myo-inositol)(in) = a 1,2-diacyl-sn-glycero-3-phospho-(1D-myo-inositol)(out)</text>
        <dbReference type="Rhea" id="RHEA:38691"/>
        <dbReference type="ChEBI" id="CHEBI:57880"/>
    </reaction>
    <physiologicalReaction direction="left-to-right" evidence="2">
        <dbReference type="Rhea" id="RHEA:38692"/>
    </physiologicalReaction>
</comment>
<comment type="cofactor">
    <cofactor evidence="1">
        <name>heme b</name>
        <dbReference type="ChEBI" id="CHEBI:60344"/>
    </cofactor>
</comment>
<comment type="subcellular location">
    <subcellularLocation>
        <location evidence="2">Cytoplasm</location>
    </subcellularLocation>
    <subcellularLocation>
        <location evidence="2">Endoplasmic reticulum membrane</location>
        <topology evidence="2">Peripheral membrane protein</topology>
    </subcellularLocation>
    <subcellularLocation>
        <location evidence="2">Microsome membrane</location>
        <topology evidence="2">Peripheral membrane protein</topology>
    </subcellularLocation>
</comment>
<comment type="similarity">
    <text evidence="5">Belongs to the SFH5 family.</text>
</comment>
<accession>Q4WEP0</accession>
<proteinExistence type="inferred from homology"/>